<feature type="chain" id="PRO_0000292958" description="Sulfite reductase [NADPH] hemoprotein beta-component">
    <location>
        <begin position="1"/>
        <end position="566"/>
    </location>
</feature>
<feature type="binding site" evidence="1">
    <location>
        <position position="430"/>
    </location>
    <ligand>
        <name>[4Fe-4S] cluster</name>
        <dbReference type="ChEBI" id="CHEBI:49883"/>
    </ligand>
</feature>
<feature type="binding site" evidence="1">
    <location>
        <position position="436"/>
    </location>
    <ligand>
        <name>[4Fe-4S] cluster</name>
        <dbReference type="ChEBI" id="CHEBI:49883"/>
    </ligand>
</feature>
<feature type="binding site" evidence="1">
    <location>
        <position position="475"/>
    </location>
    <ligand>
        <name>[4Fe-4S] cluster</name>
        <dbReference type="ChEBI" id="CHEBI:49883"/>
    </ligand>
</feature>
<feature type="binding site" evidence="1">
    <location>
        <position position="479"/>
    </location>
    <ligand>
        <name>[4Fe-4S] cluster</name>
        <dbReference type="ChEBI" id="CHEBI:49883"/>
    </ligand>
</feature>
<feature type="binding site" description="axial binding residue" evidence="1">
    <location>
        <position position="479"/>
    </location>
    <ligand>
        <name>siroheme</name>
        <dbReference type="ChEBI" id="CHEBI:60052"/>
    </ligand>
    <ligandPart>
        <name>Fe</name>
        <dbReference type="ChEBI" id="CHEBI:18248"/>
    </ligandPart>
</feature>
<comment type="function">
    <text evidence="1">Component of the sulfite reductase complex that catalyzes the 6-electron reduction of sulfite to sulfide. This is one of several activities required for the biosynthesis of L-cysteine from sulfate.</text>
</comment>
<comment type="catalytic activity">
    <reaction evidence="1">
        <text>hydrogen sulfide + 3 NADP(+) + 3 H2O = sulfite + 3 NADPH + 4 H(+)</text>
        <dbReference type="Rhea" id="RHEA:13801"/>
        <dbReference type="ChEBI" id="CHEBI:15377"/>
        <dbReference type="ChEBI" id="CHEBI:15378"/>
        <dbReference type="ChEBI" id="CHEBI:17359"/>
        <dbReference type="ChEBI" id="CHEBI:29919"/>
        <dbReference type="ChEBI" id="CHEBI:57783"/>
        <dbReference type="ChEBI" id="CHEBI:58349"/>
        <dbReference type="EC" id="1.8.1.2"/>
    </reaction>
</comment>
<comment type="cofactor">
    <cofactor evidence="1">
        <name>siroheme</name>
        <dbReference type="ChEBI" id="CHEBI:60052"/>
    </cofactor>
    <text evidence="1">Binds 1 siroheme per subunit.</text>
</comment>
<comment type="cofactor">
    <cofactor evidence="1">
        <name>[4Fe-4S] cluster</name>
        <dbReference type="ChEBI" id="CHEBI:49883"/>
    </cofactor>
    <text evidence="1">Binds 1 [4Fe-4S] cluster per subunit.</text>
</comment>
<comment type="pathway">
    <text evidence="1">Sulfur metabolism; hydrogen sulfide biosynthesis; hydrogen sulfide from sulfite (NADPH route): step 1/1.</text>
</comment>
<comment type="subunit">
    <text evidence="1">Alpha(8)-beta(8). The alpha component is a flavoprotein, the beta component is a hemoprotein.</text>
</comment>
<comment type="similarity">
    <text evidence="1">Belongs to the nitrite and sulfite reductase 4Fe-4S domain family.</text>
</comment>
<proteinExistence type="inferred from homology"/>
<gene>
    <name evidence="1" type="primary">cysI</name>
    <name type="ordered locus">BCI_0217</name>
</gene>
<evidence type="ECO:0000255" key="1">
    <source>
        <dbReference type="HAMAP-Rule" id="MF_01540"/>
    </source>
</evidence>
<keyword id="KW-0004">4Fe-4S</keyword>
<keyword id="KW-0028">Amino-acid biosynthesis</keyword>
<keyword id="KW-0198">Cysteine biosynthesis</keyword>
<keyword id="KW-0349">Heme</keyword>
<keyword id="KW-0408">Iron</keyword>
<keyword id="KW-0411">Iron-sulfur</keyword>
<keyword id="KW-0479">Metal-binding</keyword>
<keyword id="KW-0521">NADP</keyword>
<keyword id="KW-0560">Oxidoreductase</keyword>
<keyword id="KW-1185">Reference proteome</keyword>
<reference key="1">
    <citation type="journal article" date="2006" name="PLoS Biol.">
        <title>Metabolic complementarity and genomics of the dual bacterial symbiosis of sharpshooters.</title>
        <authorList>
            <person name="Wu D."/>
            <person name="Daugherty S.C."/>
            <person name="Van Aken S.E."/>
            <person name="Pai G.H."/>
            <person name="Watkins K.L."/>
            <person name="Khouri H."/>
            <person name="Tallon L.J."/>
            <person name="Zaborsky J.M."/>
            <person name="Dunbar H.E."/>
            <person name="Tran P.L."/>
            <person name="Moran N.A."/>
            <person name="Eisen J.A."/>
        </authorList>
    </citation>
    <scope>NUCLEOTIDE SEQUENCE [LARGE SCALE GENOMIC DNA]</scope>
</reference>
<name>CYSI_BAUCH</name>
<dbReference type="EC" id="1.8.1.2" evidence="1"/>
<dbReference type="EMBL" id="CP000238">
    <property type="protein sequence ID" value="ABF13903.1"/>
    <property type="molecule type" value="Genomic_DNA"/>
</dbReference>
<dbReference type="RefSeq" id="WP_011520405.1">
    <property type="nucleotide sequence ID" value="NC_007984.1"/>
</dbReference>
<dbReference type="SMR" id="Q1LTP2"/>
<dbReference type="STRING" id="374463.BCI_0217"/>
<dbReference type="KEGG" id="bci:BCI_0217"/>
<dbReference type="HOGENOM" id="CLU_001975_3_2_6"/>
<dbReference type="OrthoDB" id="3189055at2"/>
<dbReference type="UniPathway" id="UPA00140">
    <property type="reaction ID" value="UER00207"/>
</dbReference>
<dbReference type="Proteomes" id="UP000002427">
    <property type="component" value="Chromosome"/>
</dbReference>
<dbReference type="GO" id="GO:0009337">
    <property type="term" value="C:sulfite reductase complex (NADPH)"/>
    <property type="evidence" value="ECO:0007669"/>
    <property type="project" value="InterPro"/>
</dbReference>
<dbReference type="GO" id="GO:0051539">
    <property type="term" value="F:4 iron, 4 sulfur cluster binding"/>
    <property type="evidence" value="ECO:0007669"/>
    <property type="project" value="UniProtKB-KW"/>
</dbReference>
<dbReference type="GO" id="GO:0020037">
    <property type="term" value="F:heme binding"/>
    <property type="evidence" value="ECO:0007669"/>
    <property type="project" value="InterPro"/>
</dbReference>
<dbReference type="GO" id="GO:0046872">
    <property type="term" value="F:metal ion binding"/>
    <property type="evidence" value="ECO:0007669"/>
    <property type="project" value="UniProtKB-KW"/>
</dbReference>
<dbReference type="GO" id="GO:0050661">
    <property type="term" value="F:NADP binding"/>
    <property type="evidence" value="ECO:0007669"/>
    <property type="project" value="InterPro"/>
</dbReference>
<dbReference type="GO" id="GO:0050311">
    <property type="term" value="F:sulfite reductase (ferredoxin) activity"/>
    <property type="evidence" value="ECO:0007669"/>
    <property type="project" value="TreeGrafter"/>
</dbReference>
<dbReference type="GO" id="GO:0004783">
    <property type="term" value="F:sulfite reductase (NADPH) activity"/>
    <property type="evidence" value="ECO:0007669"/>
    <property type="project" value="UniProtKB-UniRule"/>
</dbReference>
<dbReference type="GO" id="GO:0019344">
    <property type="term" value="P:cysteine biosynthetic process"/>
    <property type="evidence" value="ECO:0007669"/>
    <property type="project" value="UniProtKB-KW"/>
</dbReference>
<dbReference type="GO" id="GO:0070814">
    <property type="term" value="P:hydrogen sulfide biosynthetic process"/>
    <property type="evidence" value="ECO:0007669"/>
    <property type="project" value="UniProtKB-UniRule"/>
</dbReference>
<dbReference type="GO" id="GO:0000103">
    <property type="term" value="P:sulfate assimilation"/>
    <property type="evidence" value="ECO:0007669"/>
    <property type="project" value="UniProtKB-UniRule"/>
</dbReference>
<dbReference type="FunFam" id="3.30.413.10:FF:000003">
    <property type="entry name" value="Sulfite reductase [NADPH] hemoprotein beta-component"/>
    <property type="match status" value="1"/>
</dbReference>
<dbReference type="FunFam" id="3.30.413.10:FF:000004">
    <property type="entry name" value="Sulfite reductase [NADPH] hemoprotein beta-component"/>
    <property type="match status" value="1"/>
</dbReference>
<dbReference type="Gene3D" id="3.30.413.10">
    <property type="entry name" value="Sulfite Reductase Hemoprotein, domain 1"/>
    <property type="match status" value="2"/>
</dbReference>
<dbReference type="HAMAP" id="MF_01540">
    <property type="entry name" value="CysI"/>
    <property type="match status" value="1"/>
</dbReference>
<dbReference type="InterPro" id="IPR011786">
    <property type="entry name" value="CysI"/>
</dbReference>
<dbReference type="InterPro" id="IPR005117">
    <property type="entry name" value="NiRdtase/SiRdtase_haem-b_fer"/>
</dbReference>
<dbReference type="InterPro" id="IPR036136">
    <property type="entry name" value="Nit/Sulf_reduc_fer-like_dom_sf"/>
</dbReference>
<dbReference type="InterPro" id="IPR006067">
    <property type="entry name" value="NO2/SO3_Rdtase_4Fe4S_dom"/>
</dbReference>
<dbReference type="InterPro" id="IPR045169">
    <property type="entry name" value="NO2/SO3_Rdtase_4Fe4S_prot"/>
</dbReference>
<dbReference type="InterPro" id="IPR045854">
    <property type="entry name" value="NO2/SO3_Rdtase_4Fe4S_sf"/>
</dbReference>
<dbReference type="InterPro" id="IPR006066">
    <property type="entry name" value="NO2/SO3_Rdtase_FeS/sirohaem_BS"/>
</dbReference>
<dbReference type="NCBIfam" id="TIGR02041">
    <property type="entry name" value="CysI"/>
    <property type="match status" value="1"/>
</dbReference>
<dbReference type="NCBIfam" id="NF010029">
    <property type="entry name" value="PRK13504.1"/>
    <property type="match status" value="1"/>
</dbReference>
<dbReference type="PANTHER" id="PTHR11493:SF47">
    <property type="entry name" value="SULFITE REDUCTASE [NADPH] SUBUNIT BETA"/>
    <property type="match status" value="1"/>
</dbReference>
<dbReference type="PANTHER" id="PTHR11493">
    <property type="entry name" value="SULFITE REDUCTASE [NADPH] SUBUNIT BETA-RELATED"/>
    <property type="match status" value="1"/>
</dbReference>
<dbReference type="Pfam" id="PF01077">
    <property type="entry name" value="NIR_SIR"/>
    <property type="match status" value="1"/>
</dbReference>
<dbReference type="Pfam" id="PF03460">
    <property type="entry name" value="NIR_SIR_ferr"/>
    <property type="match status" value="2"/>
</dbReference>
<dbReference type="PRINTS" id="PR00397">
    <property type="entry name" value="SIROHAEM"/>
</dbReference>
<dbReference type="SUPFAM" id="SSF56014">
    <property type="entry name" value="Nitrite and sulphite reductase 4Fe-4S domain-like"/>
    <property type="match status" value="2"/>
</dbReference>
<dbReference type="SUPFAM" id="SSF55124">
    <property type="entry name" value="Nitrite/Sulfite reductase N-terminal domain-like"/>
    <property type="match status" value="2"/>
</dbReference>
<dbReference type="PROSITE" id="PS00365">
    <property type="entry name" value="NIR_SIR"/>
    <property type="match status" value="1"/>
</dbReference>
<sequence length="566" mass="63931">MNKKIPKAILSDNERLKVASNFLRGTIAQDLQDNITGGFKGDNIQLIRFHGMYQQDDRDLRVERTCQKLEPLINMMLRCRLPGGIITPQQWLGIDSFATKHTLYGSIRLTTRQTFQFHGVLKPNLKNMHKLLHSLGLDSIATAGDMNRNVLCTSNPVESVLHQQVCNYAKMISEHFLPKTRAYAEIWLDGEKTETTEQEPILGANYLPRKFKISIVVPPLNDVDLHANDLNFIAISNLGQLVGFNVLVGGGLAMTHNDKSTYPRTASELGYISVVDTIKIAEAVITTQRDLGDRSNRKHAKTKYTIERVGVEFFKKEVEVRAGIKFKHIRPYSFTERGDRFGWVQGIDNQWHLTLFIENGRIIDDSHRKLKTGMLEIARIHQGDFRITANQNIIIAGVEKKHKATIELLARQYGLINNNITLQRKASMACVAFPTCPLAMAEAERFLPQFVTKVENIMSRHGLGQEKIILRVTGCPNGCGRAMLAEIGLVGKTIGRYNLYLGGDSIGTRIPRIYRENLTEEEILSIINDTTGRWARERQPDESYGDYVVRAGIIRPVINSALDFHN</sequence>
<protein>
    <recommendedName>
        <fullName evidence="1">Sulfite reductase [NADPH] hemoprotein beta-component</fullName>
        <shortName evidence="1">SiR-HP</shortName>
        <shortName evidence="1">SiRHP</shortName>
        <ecNumber evidence="1">1.8.1.2</ecNumber>
    </recommendedName>
</protein>
<accession>Q1LTP2</accession>
<organism>
    <name type="scientific">Baumannia cicadellinicola subsp. Homalodisca coagulata</name>
    <dbReference type="NCBI Taxonomy" id="374463"/>
    <lineage>
        <taxon>Bacteria</taxon>
        <taxon>Pseudomonadati</taxon>
        <taxon>Pseudomonadota</taxon>
        <taxon>Gammaproteobacteria</taxon>
        <taxon>Candidatus Palibaumannia</taxon>
    </lineage>
</organism>